<reference key="1">
    <citation type="journal article" date="2008" name="Gene">
        <title>Expression analysis of the calcineurin B-like gene family in rice (Oryza sativa L.) under environmental stresses.</title>
        <authorList>
            <person name="Gu Z."/>
            <person name="Ma B."/>
            <person name="Jiang Y."/>
            <person name="Chen Z."/>
            <person name="Su X."/>
            <person name="Zhang H."/>
        </authorList>
    </citation>
    <scope>NUCLEOTIDE SEQUENCE [MRNA]</scope>
    <scope>FUNCTION</scope>
    <scope>SUBCELLULAR LOCATION</scope>
    <scope>TISSUE SPECIFICITY</scope>
    <scope>INDUCTION</scope>
    <scope>GENE FAMILY</scope>
    <source>
        <strain>cv. Nipponbare</strain>
        <tissue>Seedling</tissue>
    </source>
</reference>
<reference key="2">
    <citation type="journal article" date="2005" name="Nature">
        <title>The map-based sequence of the rice genome.</title>
        <authorList>
            <consortium name="International rice genome sequencing project (IRGSP)"/>
        </authorList>
    </citation>
    <scope>NUCLEOTIDE SEQUENCE [LARGE SCALE GENOMIC DNA]</scope>
    <source>
        <strain>cv. Nipponbare</strain>
    </source>
</reference>
<reference key="3">
    <citation type="journal article" date="2013" name="Rice">
        <title>Improvement of the Oryza sativa Nipponbare reference genome using next generation sequence and optical map data.</title>
        <authorList>
            <person name="Kawahara Y."/>
            <person name="de la Bastide M."/>
            <person name="Hamilton J.P."/>
            <person name="Kanamori H."/>
            <person name="McCombie W.R."/>
            <person name="Ouyang S."/>
            <person name="Schwartz D.C."/>
            <person name="Tanaka T."/>
            <person name="Wu J."/>
            <person name="Zhou S."/>
            <person name="Childs K.L."/>
            <person name="Davidson R.M."/>
            <person name="Lin H."/>
            <person name="Quesada-Ocampo L."/>
            <person name="Vaillancourt B."/>
            <person name="Sakai H."/>
            <person name="Lee S.S."/>
            <person name="Kim J."/>
            <person name="Numa H."/>
            <person name="Itoh T."/>
            <person name="Buell C.R."/>
            <person name="Matsumoto T."/>
        </authorList>
    </citation>
    <scope>GENOME REANNOTATION</scope>
    <source>
        <strain>cv. Nipponbare</strain>
    </source>
</reference>
<reference key="4">
    <citation type="journal article" date="2004" name="Plant Physiol.">
        <title>Calcium sensors and their interacting protein kinases: genomics of the Arabidopsis and rice CBL-CIPK signaling networks.</title>
        <authorList>
            <person name="Kolukisaoglu U."/>
            <person name="Weinl S."/>
            <person name="Blazevic D."/>
            <person name="Batistic O."/>
            <person name="Kudla J."/>
        </authorList>
    </citation>
    <scope>GENE FAMILY</scope>
    <scope>NOMENCLATURE</scope>
</reference>
<reference key="5">
    <citation type="journal article" date="2005" name="Plant Physiol.">
        <title>A gibberellin-regulated calcineurin B in rice localizes to the tonoplast and is implicated in vacuole function.</title>
        <authorList>
            <person name="Hwang Y.-S."/>
            <person name="Bethke P.C."/>
            <person name="Cheong Y.H."/>
            <person name="Chang H.-S."/>
            <person name="Zhu T."/>
            <person name="Jones R.L."/>
        </authorList>
    </citation>
    <scope>GENE FAMILY</scope>
</reference>
<feature type="initiator methionine" description="Removed" evidence="2">
    <location>
        <position position="1"/>
    </location>
</feature>
<feature type="chain" id="PRO_0000337771" description="Calcineurin B-like protein 8">
    <location>
        <begin position="2"/>
        <end position="213"/>
    </location>
</feature>
<feature type="domain" description="EF-hand 1" evidence="5">
    <location>
        <begin position="31"/>
        <end position="66"/>
    </location>
</feature>
<feature type="domain" description="EF-hand 2" evidence="3">
    <location>
        <begin position="67"/>
        <end position="102"/>
    </location>
</feature>
<feature type="domain" description="EF-hand 3" evidence="3">
    <location>
        <begin position="104"/>
        <end position="139"/>
    </location>
</feature>
<feature type="domain" description="EF-hand 4" evidence="3">
    <location>
        <begin position="148"/>
        <end position="183"/>
    </location>
</feature>
<feature type="binding site" evidence="3">
    <location>
        <position position="161"/>
    </location>
    <ligand>
        <name>Ca(2+)</name>
        <dbReference type="ChEBI" id="CHEBI:29108"/>
    </ligand>
</feature>
<feature type="binding site" evidence="3">
    <location>
        <position position="163"/>
    </location>
    <ligand>
        <name>Ca(2+)</name>
        <dbReference type="ChEBI" id="CHEBI:29108"/>
    </ligand>
</feature>
<feature type="binding site" evidence="3">
    <location>
        <position position="165"/>
    </location>
    <ligand>
        <name>Ca(2+)</name>
        <dbReference type="ChEBI" id="CHEBI:29108"/>
    </ligand>
</feature>
<feature type="binding site" evidence="3">
    <location>
        <position position="167"/>
    </location>
    <ligand>
        <name>Ca(2+)</name>
        <dbReference type="ChEBI" id="CHEBI:29108"/>
    </ligand>
</feature>
<feature type="binding site" evidence="3">
    <location>
        <position position="172"/>
    </location>
    <ligand>
        <name>Ca(2+)</name>
        <dbReference type="ChEBI" id="CHEBI:29108"/>
    </ligand>
</feature>
<feature type="site" description="Involved in dimerization" evidence="1">
    <location>
        <position position="140"/>
    </location>
</feature>
<feature type="lipid moiety-binding region" description="N-myristoyl glycine" evidence="1">
    <location>
        <position position="2"/>
    </location>
</feature>
<protein>
    <recommendedName>
        <fullName>Calcineurin B-like protein 8</fullName>
    </recommendedName>
</protein>
<proteinExistence type="evidence at transcript level"/>
<evidence type="ECO:0000250" key="1"/>
<evidence type="ECO:0000255" key="2"/>
<evidence type="ECO:0000255" key="3">
    <source>
        <dbReference type="PROSITE-ProRule" id="PRU00448"/>
    </source>
</evidence>
<evidence type="ECO:0000269" key="4">
    <source>
    </source>
</evidence>
<evidence type="ECO:0000305" key="5"/>
<evidence type="ECO:0000305" key="6">
    <source>
    </source>
</evidence>
<comment type="function">
    <text evidence="1 4">Acts as a calcium sensor. May function as positive regulator of salt stress responses. CBL proteins interact with CIPK serine-threonine protein kinases. Binding of a CBL protein to the regulatory NAF domain of a CIPK protein lead to the activation of the kinase in a calcium-dependent manner (By similarity).</text>
</comment>
<comment type="subunit">
    <text evidence="1">Homodimer.</text>
</comment>
<comment type="subcellular location">
    <subcellularLocation>
        <location evidence="6">Cell membrane</location>
        <topology evidence="6">Lipid-anchor</topology>
    </subcellularLocation>
</comment>
<comment type="tissue specificity">
    <text evidence="4">Expressed at low levels in roots, shoots, culms, leaves and young spikelets.</text>
</comment>
<comment type="induction">
    <text evidence="4">By drought and cold stresses, and abscisic acid (ABA).</text>
</comment>
<comment type="similarity">
    <text evidence="5">Belongs to the calcineurin regulatory subunit family.</text>
</comment>
<comment type="sequence caution" evidence="5">
    <conflict type="erroneous gene model prediction">
        <sequence resource="EMBL-CDS" id="BAD21759"/>
    </conflict>
</comment>
<organism>
    <name type="scientific">Oryza sativa subsp. japonica</name>
    <name type="common">Rice</name>
    <dbReference type="NCBI Taxonomy" id="39947"/>
    <lineage>
        <taxon>Eukaryota</taxon>
        <taxon>Viridiplantae</taxon>
        <taxon>Streptophyta</taxon>
        <taxon>Embryophyta</taxon>
        <taxon>Tracheophyta</taxon>
        <taxon>Spermatophyta</taxon>
        <taxon>Magnoliopsida</taxon>
        <taxon>Liliopsida</taxon>
        <taxon>Poales</taxon>
        <taxon>Poaceae</taxon>
        <taxon>BOP clade</taxon>
        <taxon>Oryzoideae</taxon>
        <taxon>Oryzeae</taxon>
        <taxon>Oryzinae</taxon>
        <taxon>Oryza</taxon>
        <taxon>Oryza sativa</taxon>
    </lineage>
</organism>
<name>CNBL8_ORYSJ</name>
<keyword id="KW-0106">Calcium</keyword>
<keyword id="KW-1003">Cell membrane</keyword>
<keyword id="KW-0449">Lipoprotein</keyword>
<keyword id="KW-0472">Membrane</keyword>
<keyword id="KW-0479">Metal-binding</keyword>
<keyword id="KW-0519">Myristate</keyword>
<keyword id="KW-1185">Reference proteome</keyword>
<keyword id="KW-0677">Repeat</keyword>
<gene>
    <name type="primary">CBL8</name>
    <name type="ordered locus">Os02g0291400</name>
    <name type="ordered locus">LOC_Os02g18930</name>
    <name type="ORF">OJ1124_E11.15</name>
</gene>
<sequence>MGCVSSKQFKRAAQHEDPAILAKETTFSVSEVEALFELFKKISHSIFRDGLIHKEEFQLALFRNSNKKNLFANRIFDLFDLKRNGVIDFGEFVRSLSIFHPETPLGDKIAFAFRLYDLRGTGCIEREELHEMVLALLNESDLFLSEEAVEQIVDQTFKQADLNDDGKIDPDEWKTFASKNPALLKNMTLPYLKDITMVFPSFILNSEVCEEEL</sequence>
<accession>Q3HRN9</accession>
<accession>A0A0P0VHT1</accession>
<accession>Q6K870</accession>
<dbReference type="EMBL" id="DQ201202">
    <property type="protein sequence ID" value="ABA54183.1"/>
    <property type="molecule type" value="mRNA"/>
</dbReference>
<dbReference type="EMBL" id="AP004229">
    <property type="protein sequence ID" value="BAD21759.1"/>
    <property type="status" value="ALT_SEQ"/>
    <property type="molecule type" value="Genomic_DNA"/>
</dbReference>
<dbReference type="EMBL" id="AP014958">
    <property type="protein sequence ID" value="BAS78194.1"/>
    <property type="molecule type" value="Genomic_DNA"/>
</dbReference>
<dbReference type="RefSeq" id="XP_015623985.1">
    <property type="nucleotide sequence ID" value="XM_015768499.1"/>
</dbReference>
<dbReference type="SMR" id="Q3HRN9"/>
<dbReference type="FunCoup" id="Q3HRN9">
    <property type="interactions" value="490"/>
</dbReference>
<dbReference type="STRING" id="39947.Q3HRN9"/>
<dbReference type="PaxDb" id="39947-Q3HRN9"/>
<dbReference type="EnsemblPlants" id="Os02t0291400-01">
    <property type="protein sequence ID" value="Os02t0291400-01"/>
    <property type="gene ID" value="Os02g0291400"/>
</dbReference>
<dbReference type="GeneID" id="107276173"/>
<dbReference type="Gramene" id="Os02t0291400-01">
    <property type="protein sequence ID" value="Os02t0291400-01"/>
    <property type="gene ID" value="Os02g0291400"/>
</dbReference>
<dbReference type="KEGG" id="osa:107276173"/>
<dbReference type="eggNOG" id="KOG0034">
    <property type="taxonomic scope" value="Eukaryota"/>
</dbReference>
<dbReference type="HOGENOM" id="CLU_061288_21_0_1"/>
<dbReference type="InParanoid" id="Q3HRN9"/>
<dbReference type="OMA" id="CQQRCKK"/>
<dbReference type="OrthoDB" id="191686at2759"/>
<dbReference type="Proteomes" id="UP000000763">
    <property type="component" value="Chromosome 2"/>
</dbReference>
<dbReference type="Proteomes" id="UP000059680">
    <property type="component" value="Chromosome 2"/>
</dbReference>
<dbReference type="GO" id="GO:0005886">
    <property type="term" value="C:plasma membrane"/>
    <property type="evidence" value="ECO:0007669"/>
    <property type="project" value="UniProtKB-SubCell"/>
</dbReference>
<dbReference type="GO" id="GO:0005509">
    <property type="term" value="F:calcium ion binding"/>
    <property type="evidence" value="ECO:0007669"/>
    <property type="project" value="InterPro"/>
</dbReference>
<dbReference type="GO" id="GO:0019900">
    <property type="term" value="F:kinase binding"/>
    <property type="evidence" value="ECO:0007669"/>
    <property type="project" value="InterPro"/>
</dbReference>
<dbReference type="GO" id="GO:0019722">
    <property type="term" value="P:calcium-mediated signaling"/>
    <property type="evidence" value="ECO:0007669"/>
    <property type="project" value="InterPro"/>
</dbReference>
<dbReference type="CDD" id="cd00051">
    <property type="entry name" value="EFh"/>
    <property type="match status" value="1"/>
</dbReference>
<dbReference type="FunFam" id="1.10.238.10:FF:000073">
    <property type="entry name" value="calcineurin B-like protein 3"/>
    <property type="match status" value="1"/>
</dbReference>
<dbReference type="Gene3D" id="1.10.238.10">
    <property type="entry name" value="EF-hand"/>
    <property type="match status" value="1"/>
</dbReference>
<dbReference type="InterPro" id="IPR045198">
    <property type="entry name" value="CNBL1-10"/>
</dbReference>
<dbReference type="InterPro" id="IPR011992">
    <property type="entry name" value="EF-hand-dom_pair"/>
</dbReference>
<dbReference type="InterPro" id="IPR018247">
    <property type="entry name" value="EF_Hand_1_Ca_BS"/>
</dbReference>
<dbReference type="InterPro" id="IPR002048">
    <property type="entry name" value="EF_hand_dom"/>
</dbReference>
<dbReference type="PANTHER" id="PTHR23056">
    <property type="entry name" value="CALCINEURIN B"/>
    <property type="match status" value="1"/>
</dbReference>
<dbReference type="PANTHER" id="PTHR23056:SF137">
    <property type="entry name" value="CALCINEURIN B-LIKE PROTEIN 8"/>
    <property type="match status" value="1"/>
</dbReference>
<dbReference type="Pfam" id="PF13202">
    <property type="entry name" value="EF-hand_5"/>
    <property type="match status" value="1"/>
</dbReference>
<dbReference type="Pfam" id="PF13499">
    <property type="entry name" value="EF-hand_7"/>
    <property type="match status" value="1"/>
</dbReference>
<dbReference type="PRINTS" id="PR00450">
    <property type="entry name" value="RECOVERIN"/>
</dbReference>
<dbReference type="SMART" id="SM00054">
    <property type="entry name" value="EFh"/>
    <property type="match status" value="3"/>
</dbReference>
<dbReference type="SUPFAM" id="SSF47473">
    <property type="entry name" value="EF-hand"/>
    <property type="match status" value="1"/>
</dbReference>
<dbReference type="PROSITE" id="PS00018">
    <property type="entry name" value="EF_HAND_1"/>
    <property type="match status" value="1"/>
</dbReference>
<dbReference type="PROSITE" id="PS50222">
    <property type="entry name" value="EF_HAND_2"/>
    <property type="match status" value="3"/>
</dbReference>